<sequence length="358" mass="38402">MALLSSTLRAPLVFSKNPKPVSLSSLHSRIYLSPRSPRFPSLRFISAAGDTGDAEKPSSNISDEWGEGSEPETKPFTYFKLPDSDPPKDEDEWGKGAAAGAGSYNDAGNGTPTFAAEASPEAEAEDGVDENLEGLKRSLVDTVYGTELGFRARSEVRAEVSEFVAQLEAANPTPAPVEEPDLLNGNWVLLYTASSELLPLLAAGSLPLLKLDKISQTIDTDSFTVVNSTTLSSPFASFSFSVSASFEVRSPTRIQVTFKEGSLQPPEIKSKIDLPENINIFGQQLSLGPLLQSLGPLENVVANISRVISGQSPLKIPIPGERTSSWLITTYLDKDLRISRGDGGLFVLAREGSSLLDQ</sequence>
<name>PG1_PEA</name>
<dbReference type="EMBL" id="AF043905">
    <property type="protein sequence ID" value="AAD02288.1"/>
    <property type="molecule type" value="mRNA"/>
</dbReference>
<dbReference type="OrthoDB" id="498392at2759"/>
<dbReference type="GO" id="GO:0009507">
    <property type="term" value="C:chloroplast"/>
    <property type="evidence" value="ECO:0007669"/>
    <property type="project" value="UniProtKB-SubCell"/>
</dbReference>
<dbReference type="InterPro" id="IPR039633">
    <property type="entry name" value="PAP"/>
</dbReference>
<dbReference type="InterPro" id="IPR006843">
    <property type="entry name" value="PAP/fibrillin_dom"/>
</dbReference>
<dbReference type="PANTHER" id="PTHR31906">
    <property type="entry name" value="PLASTID-LIPID-ASSOCIATED PROTEIN 4, CHLOROPLASTIC-RELATED"/>
    <property type="match status" value="1"/>
</dbReference>
<dbReference type="Pfam" id="PF04755">
    <property type="entry name" value="PAP_fibrillin"/>
    <property type="match status" value="1"/>
</dbReference>
<accession>Q9ZP40</accession>
<organism>
    <name type="scientific">Pisum sativum</name>
    <name type="common">Garden pea</name>
    <name type="synonym">Lathyrus oleraceus</name>
    <dbReference type="NCBI Taxonomy" id="3888"/>
    <lineage>
        <taxon>Eukaryota</taxon>
        <taxon>Viridiplantae</taxon>
        <taxon>Streptophyta</taxon>
        <taxon>Embryophyta</taxon>
        <taxon>Tracheophyta</taxon>
        <taxon>Spermatophyta</taxon>
        <taxon>Magnoliopsida</taxon>
        <taxon>eudicotyledons</taxon>
        <taxon>Gunneridae</taxon>
        <taxon>Pentapetalae</taxon>
        <taxon>rosids</taxon>
        <taxon>fabids</taxon>
        <taxon>Fabales</taxon>
        <taxon>Fabaceae</taxon>
        <taxon>Papilionoideae</taxon>
        <taxon>50 kb inversion clade</taxon>
        <taxon>NPAAA clade</taxon>
        <taxon>Hologalegina</taxon>
        <taxon>IRL clade</taxon>
        <taxon>Fabeae</taxon>
        <taxon>Pisum</taxon>
    </lineage>
</organism>
<keyword id="KW-0150">Chloroplast</keyword>
<keyword id="KW-0903">Direct protein sequencing</keyword>
<keyword id="KW-0934">Plastid</keyword>
<keyword id="KW-0809">Transit peptide</keyword>
<gene>
    <name type="primary">PG1</name>
</gene>
<proteinExistence type="evidence at protein level"/>
<feature type="transit peptide" description="Chloroplast" evidence="2">
    <location>
        <begin position="1"/>
        <end position="47"/>
    </location>
</feature>
<feature type="chain" id="PRO_0000023203" description="Plastoglobulin-1, chloroplastic">
    <location>
        <begin position="48"/>
        <end position="358"/>
    </location>
</feature>
<feature type="region of interest" description="Disordered" evidence="1">
    <location>
        <begin position="48"/>
        <end position="114"/>
    </location>
</feature>
<evidence type="ECO:0000256" key="1">
    <source>
        <dbReference type="SAM" id="MobiDB-lite"/>
    </source>
</evidence>
<evidence type="ECO:0000269" key="2">
    <source>
    </source>
</evidence>
<evidence type="ECO:0000305" key="3"/>
<protein>
    <recommendedName>
        <fullName>Plastoglobulin-1, chloroplastic</fullName>
    </recommendedName>
</protein>
<reference key="1">
    <citation type="journal article" date="1999" name="Planta">
        <title>Identification of proteins associated with plastoglobules isolated from pea (Pisum sativum L.) chloroplasts.</title>
        <authorList>
            <person name="Kessler F."/>
            <person name="Schnell D."/>
            <person name="Blobel G."/>
        </authorList>
    </citation>
    <scope>NUCLEOTIDE SEQUENCE [MRNA]</scope>
    <scope>PROTEIN SEQUENCE OF 48-67; 75-80 AND 317-358</scope>
    <source>
        <strain>cv. Green Arrow</strain>
    </source>
</reference>
<comment type="function">
    <text>May form together with other plastoglobulins a coat on the surface of the lipoprotein particle. The coat may contain receptors for attachment to the thylakoid membrane as well as regulatory proteins that may function in the transfer of lipids to and from the thylakoid membranes.</text>
</comment>
<comment type="subcellular location">
    <subcellularLocation>
        <location>Plastid</location>
        <location>Chloroplast</location>
    </subcellularLocation>
    <text>Localized to the plastoglobules periphery.</text>
</comment>
<comment type="similarity">
    <text evidence="3">Belongs to the PAP/fibrillin family.</text>
</comment>